<reference key="1">
    <citation type="journal article" date="2004" name="DNA Res.">
        <title>Prediction of the coding sequences of mouse homologues of KIAA gene: IV. The complete nucleotide sequences of 500 mouse KIAA-homologous cDNAs identified by screening of terminal sequences of cDNA clones randomly sampled from size-fractionated libraries.</title>
        <authorList>
            <person name="Okazaki N."/>
            <person name="Kikuno R."/>
            <person name="Ohara R."/>
            <person name="Inamoto S."/>
            <person name="Koseki H."/>
            <person name="Hiraoka S."/>
            <person name="Saga Y."/>
            <person name="Seino S."/>
            <person name="Nishimura M."/>
            <person name="Kaisho T."/>
            <person name="Hoshino K."/>
            <person name="Kitamura H."/>
            <person name="Nagase T."/>
            <person name="Ohara O."/>
            <person name="Koga H."/>
        </authorList>
    </citation>
    <scope>NUCLEOTIDE SEQUENCE [LARGE SCALE MRNA] (ISOFORM 2)</scope>
    <source>
        <tissue>Pancreatic islet</tissue>
    </source>
</reference>
<reference key="2">
    <citation type="journal article" date="2005" name="Science">
        <title>The transcriptional landscape of the mammalian genome.</title>
        <authorList>
            <person name="Carninci P."/>
            <person name="Kasukawa T."/>
            <person name="Katayama S."/>
            <person name="Gough J."/>
            <person name="Frith M.C."/>
            <person name="Maeda N."/>
            <person name="Oyama R."/>
            <person name="Ravasi T."/>
            <person name="Lenhard B."/>
            <person name="Wells C."/>
            <person name="Kodzius R."/>
            <person name="Shimokawa K."/>
            <person name="Bajic V.B."/>
            <person name="Brenner S.E."/>
            <person name="Batalov S."/>
            <person name="Forrest A.R."/>
            <person name="Zavolan M."/>
            <person name="Davis M.J."/>
            <person name="Wilming L.G."/>
            <person name="Aidinis V."/>
            <person name="Allen J.E."/>
            <person name="Ambesi-Impiombato A."/>
            <person name="Apweiler R."/>
            <person name="Aturaliya R.N."/>
            <person name="Bailey T.L."/>
            <person name="Bansal M."/>
            <person name="Baxter L."/>
            <person name="Beisel K.W."/>
            <person name="Bersano T."/>
            <person name="Bono H."/>
            <person name="Chalk A.M."/>
            <person name="Chiu K.P."/>
            <person name="Choudhary V."/>
            <person name="Christoffels A."/>
            <person name="Clutterbuck D.R."/>
            <person name="Crowe M.L."/>
            <person name="Dalla E."/>
            <person name="Dalrymple B.P."/>
            <person name="de Bono B."/>
            <person name="Della Gatta G."/>
            <person name="di Bernardo D."/>
            <person name="Down T."/>
            <person name="Engstrom P."/>
            <person name="Fagiolini M."/>
            <person name="Faulkner G."/>
            <person name="Fletcher C.F."/>
            <person name="Fukushima T."/>
            <person name="Furuno M."/>
            <person name="Futaki S."/>
            <person name="Gariboldi M."/>
            <person name="Georgii-Hemming P."/>
            <person name="Gingeras T.R."/>
            <person name="Gojobori T."/>
            <person name="Green R.E."/>
            <person name="Gustincich S."/>
            <person name="Harbers M."/>
            <person name="Hayashi Y."/>
            <person name="Hensch T.K."/>
            <person name="Hirokawa N."/>
            <person name="Hill D."/>
            <person name="Huminiecki L."/>
            <person name="Iacono M."/>
            <person name="Ikeo K."/>
            <person name="Iwama A."/>
            <person name="Ishikawa T."/>
            <person name="Jakt M."/>
            <person name="Kanapin A."/>
            <person name="Katoh M."/>
            <person name="Kawasawa Y."/>
            <person name="Kelso J."/>
            <person name="Kitamura H."/>
            <person name="Kitano H."/>
            <person name="Kollias G."/>
            <person name="Krishnan S.P."/>
            <person name="Kruger A."/>
            <person name="Kummerfeld S.K."/>
            <person name="Kurochkin I.V."/>
            <person name="Lareau L.F."/>
            <person name="Lazarevic D."/>
            <person name="Lipovich L."/>
            <person name="Liu J."/>
            <person name="Liuni S."/>
            <person name="McWilliam S."/>
            <person name="Madan Babu M."/>
            <person name="Madera M."/>
            <person name="Marchionni L."/>
            <person name="Matsuda H."/>
            <person name="Matsuzawa S."/>
            <person name="Miki H."/>
            <person name="Mignone F."/>
            <person name="Miyake S."/>
            <person name="Morris K."/>
            <person name="Mottagui-Tabar S."/>
            <person name="Mulder N."/>
            <person name="Nakano N."/>
            <person name="Nakauchi H."/>
            <person name="Ng P."/>
            <person name="Nilsson R."/>
            <person name="Nishiguchi S."/>
            <person name="Nishikawa S."/>
            <person name="Nori F."/>
            <person name="Ohara O."/>
            <person name="Okazaki Y."/>
            <person name="Orlando V."/>
            <person name="Pang K.C."/>
            <person name="Pavan W.J."/>
            <person name="Pavesi G."/>
            <person name="Pesole G."/>
            <person name="Petrovsky N."/>
            <person name="Piazza S."/>
            <person name="Reed J."/>
            <person name="Reid J.F."/>
            <person name="Ring B.Z."/>
            <person name="Ringwald M."/>
            <person name="Rost B."/>
            <person name="Ruan Y."/>
            <person name="Salzberg S.L."/>
            <person name="Sandelin A."/>
            <person name="Schneider C."/>
            <person name="Schoenbach C."/>
            <person name="Sekiguchi K."/>
            <person name="Semple C.A."/>
            <person name="Seno S."/>
            <person name="Sessa L."/>
            <person name="Sheng Y."/>
            <person name="Shibata Y."/>
            <person name="Shimada H."/>
            <person name="Shimada K."/>
            <person name="Silva D."/>
            <person name="Sinclair B."/>
            <person name="Sperling S."/>
            <person name="Stupka E."/>
            <person name="Sugiura K."/>
            <person name="Sultana R."/>
            <person name="Takenaka Y."/>
            <person name="Taki K."/>
            <person name="Tammoja K."/>
            <person name="Tan S.L."/>
            <person name="Tang S."/>
            <person name="Taylor M.S."/>
            <person name="Tegner J."/>
            <person name="Teichmann S.A."/>
            <person name="Ueda H.R."/>
            <person name="van Nimwegen E."/>
            <person name="Verardo R."/>
            <person name="Wei C.L."/>
            <person name="Yagi K."/>
            <person name="Yamanishi H."/>
            <person name="Zabarovsky E."/>
            <person name="Zhu S."/>
            <person name="Zimmer A."/>
            <person name="Hide W."/>
            <person name="Bult C."/>
            <person name="Grimmond S.M."/>
            <person name="Teasdale R.D."/>
            <person name="Liu E.T."/>
            <person name="Brusic V."/>
            <person name="Quackenbush J."/>
            <person name="Wahlestedt C."/>
            <person name="Mattick J.S."/>
            <person name="Hume D.A."/>
            <person name="Kai C."/>
            <person name="Sasaki D."/>
            <person name="Tomaru Y."/>
            <person name="Fukuda S."/>
            <person name="Kanamori-Katayama M."/>
            <person name="Suzuki M."/>
            <person name="Aoki J."/>
            <person name="Arakawa T."/>
            <person name="Iida J."/>
            <person name="Imamura K."/>
            <person name="Itoh M."/>
            <person name="Kato T."/>
            <person name="Kawaji H."/>
            <person name="Kawagashira N."/>
            <person name="Kawashima T."/>
            <person name="Kojima M."/>
            <person name="Kondo S."/>
            <person name="Konno H."/>
            <person name="Nakano K."/>
            <person name="Ninomiya N."/>
            <person name="Nishio T."/>
            <person name="Okada M."/>
            <person name="Plessy C."/>
            <person name="Shibata K."/>
            <person name="Shiraki T."/>
            <person name="Suzuki S."/>
            <person name="Tagami M."/>
            <person name="Waki K."/>
            <person name="Watahiki A."/>
            <person name="Okamura-Oho Y."/>
            <person name="Suzuki H."/>
            <person name="Kawai J."/>
            <person name="Hayashizaki Y."/>
        </authorList>
    </citation>
    <scope>NUCLEOTIDE SEQUENCE [LARGE SCALE MRNA] (ISOFORMS 1 AND 3)</scope>
    <source>
        <strain>C57BL/6J</strain>
        <strain>NOD</strain>
        <tissue>Dendritic cell</tissue>
        <tissue>Embryo</tissue>
        <tissue>Mammary gland</tissue>
        <tissue>Tongue</tissue>
    </source>
</reference>
<reference key="3">
    <citation type="journal article" date="2004" name="Genome Res.">
        <title>The status, quality, and expansion of the NIH full-length cDNA project: the Mammalian Gene Collection (MGC).</title>
        <authorList>
            <consortium name="The MGC Project Team"/>
        </authorList>
    </citation>
    <scope>NUCLEOTIDE SEQUENCE [LARGE SCALE MRNA] (ISOFORM 1)</scope>
    <source>
        <strain>C57BL/6J</strain>
        <strain>FVB/N</strain>
        <strain>FVB/N-3</strain>
        <tissue>Eye</tissue>
        <tissue>Mammary tumor</tissue>
        <tissue>Olfactory epithelium</tissue>
    </source>
</reference>
<comment type="function">
    <text evidence="2">Plays a role in DNA double-strand break (DBS) repair via homologous recombination (HR). Serves as a scaffolding protein that helps to promote the recruitment of DNA-processing enzymes like the helicase BLM and recombinase RAD51 to site of DNA damage, and hence contributes to maintain genomic integrity (By similarity).</text>
</comment>
<comment type="subunit">
    <text evidence="1">Found in a complex, at least composed of BLM, RAD51 and SPIDR; the complex formation is mediated by SPIDR. Interacts (via C-terminal region) with BLM; the interaction is direct. Interacts with RAD51; the interaction is direct. Interacts (via the C-terminal region) with FIGNL1 (via N-terminal one-half region); the interaction is direct (By similarity).</text>
</comment>
<comment type="subcellular location">
    <subcellularLocation>
        <location evidence="1">Nucleus</location>
    </subcellularLocation>
    <text evidence="1">Together with BLM, is redistributed in discrete nuclear DNA damage-induced foci following hydroxyurea (HU) or camptothecin (CPT) treatment.</text>
</comment>
<comment type="alternative products">
    <event type="alternative splicing"/>
    <isoform>
        <id>Q8BGX7-1</id>
        <name>1</name>
        <sequence type="displayed"/>
    </isoform>
    <isoform>
        <id>Q8BGX7-2</id>
        <name>2</name>
        <sequence type="described" ref="VSP_020769"/>
    </isoform>
    <isoform>
        <id>Q8BGX7-3</id>
        <name>3</name>
        <sequence type="described" ref="VSP_020767 VSP_020768"/>
    </isoform>
</comment>
<comment type="sequence caution" evidence="6">
    <conflict type="frameshift">
        <sequence resource="EMBL-CDS" id="AAH26877"/>
    </conflict>
</comment>
<comment type="sequence caution" evidence="6">
    <conflict type="frameshift">
        <sequence resource="EMBL-CDS" id="BAC35167"/>
    </conflict>
</comment>
<comment type="sequence caution" evidence="6">
    <conflict type="erroneous initiation">
        <sequence resource="EMBL-CDS" id="BAD32180"/>
    </conflict>
    <text>Extended N-terminus.</text>
</comment>
<organism>
    <name type="scientific">Mus musculus</name>
    <name type="common">Mouse</name>
    <dbReference type="NCBI Taxonomy" id="10090"/>
    <lineage>
        <taxon>Eukaryota</taxon>
        <taxon>Metazoa</taxon>
        <taxon>Chordata</taxon>
        <taxon>Craniata</taxon>
        <taxon>Vertebrata</taxon>
        <taxon>Euteleostomi</taxon>
        <taxon>Mammalia</taxon>
        <taxon>Eutheria</taxon>
        <taxon>Euarchontoglires</taxon>
        <taxon>Glires</taxon>
        <taxon>Rodentia</taxon>
        <taxon>Myomorpha</taxon>
        <taxon>Muroidea</taxon>
        <taxon>Muridae</taxon>
        <taxon>Murinae</taxon>
        <taxon>Mus</taxon>
        <taxon>Mus</taxon>
    </lineage>
</organism>
<proteinExistence type="evidence at transcript level"/>
<accession>Q8BGX7</accession>
<accession>Q3TCD0</accession>
<accession>Q5U457</accession>
<accession>Q6A0B6</accession>
<accession>Q6IS60</accession>
<accession>Q811E1</accession>
<accession>Q8BWD6</accession>
<accession>Q8R305</accession>
<name>SPIDR_MOUSE</name>
<evidence type="ECO:0000250" key="1"/>
<evidence type="ECO:0000250" key="2">
    <source>
        <dbReference type="UniProtKB" id="Q14159"/>
    </source>
</evidence>
<evidence type="ECO:0000256" key="3">
    <source>
        <dbReference type="SAM" id="MobiDB-lite"/>
    </source>
</evidence>
<evidence type="ECO:0000303" key="4">
    <source>
    </source>
</evidence>
<evidence type="ECO:0000303" key="5">
    <source>
    </source>
</evidence>
<evidence type="ECO:0000305" key="6"/>
<feature type="chain" id="PRO_0000251721" description="DNA repair-scaffolding protein">
    <location>
        <begin position="1"/>
        <end position="933"/>
    </location>
</feature>
<feature type="region of interest" description="Disordered" evidence="3">
    <location>
        <begin position="1"/>
        <end position="34"/>
    </location>
</feature>
<feature type="region of interest" description="Disordered" evidence="3">
    <location>
        <begin position="67"/>
        <end position="174"/>
    </location>
</feature>
<feature type="region of interest" description="Necessary for interaction with RAD51" evidence="1">
    <location>
        <begin position="175"/>
        <end position="469"/>
    </location>
</feature>
<feature type="region of interest" description="Disordered" evidence="3">
    <location>
        <begin position="205"/>
        <end position="224"/>
    </location>
</feature>
<feature type="compositionally biased region" description="Basic and acidic residues" evidence="3">
    <location>
        <begin position="16"/>
        <end position="29"/>
    </location>
</feature>
<feature type="compositionally biased region" description="Basic and acidic residues" evidence="3">
    <location>
        <begin position="71"/>
        <end position="87"/>
    </location>
</feature>
<feature type="compositionally biased region" description="Basic and acidic residues" evidence="3">
    <location>
        <begin position="119"/>
        <end position="132"/>
    </location>
</feature>
<feature type="compositionally biased region" description="Acidic residues" evidence="3">
    <location>
        <begin position="138"/>
        <end position="148"/>
    </location>
</feature>
<feature type="compositionally biased region" description="Basic and acidic residues" evidence="3">
    <location>
        <begin position="214"/>
        <end position="224"/>
    </location>
</feature>
<feature type="splice variant" id="VSP_020767" description="In isoform 3." evidence="5">
    <location>
        <begin position="1"/>
        <end position="173"/>
    </location>
</feature>
<feature type="splice variant" id="VSP_020768" description="In isoform 3." evidence="5">
    <original>LDISDCDSCASLTSDDRLCEPSE</original>
    <variation>MIASVAPHCPSEVPPGLLKPEEK</variation>
    <location>
        <begin position="174"/>
        <end position="196"/>
    </location>
</feature>
<feature type="splice variant" id="VSP_020769" description="In isoform 2." evidence="4">
    <location>
        <begin position="827"/>
        <end position="933"/>
    </location>
</feature>
<feature type="sequence conflict" description="In Ref. 1; BAD32180." evidence="6" ref="1">
    <original>S</original>
    <variation>F</variation>
    <location>
        <position position="60"/>
    </location>
</feature>
<feature type="sequence conflict" description="In Ref. 2; BAE42027." evidence="6" ref="2">
    <original>K</original>
    <variation>E</variation>
    <location>
        <position position="228"/>
    </location>
</feature>
<feature type="sequence conflict" description="In Ref. 3; AAH85258." evidence="6" ref="3">
    <original>F</original>
    <variation>V</variation>
    <location>
        <position position="806"/>
    </location>
</feature>
<sequence length="933" mass="103297">MSGARRPGTSKRKRNWHIEHPSFREERSQQLRRGNFKTVEAADSLSKAWLKCGEGFQDTSEILSLASEKTGITEKHLELSPKPKTETTSKNASELPNIIWSSSESDFSDEDKTLPALQRDGRHGPRADRLGDRTISCPEDEDIEDELQVIDWEVNSDKEDPGGPSECEDDKGTLDISDCDSCASLTSDDRLCEPSEPISTEILEYSSDSEKEEDPEHSLFIDSESPHKYQADFKSDARWCLVSQTDSEANSAEPTLTPQKYTVKFPKTPEYSVTKKKLLRGGLAERLQELQNRKRSAISLWRHRCVSYQMTPLGRKSGVLTVKILELHEECSMQVAVCEQLAGPPITSPPGGLAPRPGAYLKVLFTRETADHLMGHPQDIIYIFPPWQKLLIPNGSCSIILNTYFCQKAIAKETVREDLYSPDISLSRRNITLAQTFRIKDITDNSSINQTTYDSLATPGTGWTHGHEKAEQHLIVAAPLRNSLLDIVESQRAGLWSGVRVQVVVQRVYSLLSRDGARSQQGHTVGHADASGAWSCLLVQDACGMFGEVFLNSTLWKSRQLEGKSCSMSGVKVLQKATRGRTPGLFSLIDSLWPPVISLTEPSCGQPSGETKTYLPPPIFCYIFSAHPTLGQIDAIEDHISKLYQPPVVRCLKEILQTNECSTRCSFYARVIYQKPQLKNLLAQKEIWLLVTDITLQTQDERDHSLPKTLPVYIAPSCVLGPEVVEELALLVSYNLLFRDAFKDNGQIVCIERTVILPQKPLLCVPSASCDLPSPVTLDELSALTPVNSICSVQGTVVDVDESTAFSWPVCDRCGNGRLEQKPEDGGTFSCGDCSQLVLSPLQERHLHVFLDCPTRPESTVKVKLLESSISLLLMSAASEDGSYEVESVLGKEMGPLLCFVQSITTQQSSCVVTLEEIELLSTEGATAAQPPP</sequence>
<protein>
    <recommendedName>
        <fullName>DNA repair-scaffolding protein</fullName>
    </recommendedName>
    <alternativeName>
        <fullName>Scaffolding protein involved in DNA repair</fullName>
    </alternativeName>
</protein>
<dbReference type="EMBL" id="AK172902">
    <property type="protein sequence ID" value="BAD32180.1"/>
    <property type="status" value="ALT_INIT"/>
    <property type="molecule type" value="mRNA"/>
</dbReference>
<dbReference type="EMBL" id="AK044836">
    <property type="protein sequence ID" value="BAC32113.1"/>
    <property type="molecule type" value="mRNA"/>
</dbReference>
<dbReference type="EMBL" id="AK052832">
    <property type="protein sequence ID" value="BAC35167.1"/>
    <property type="status" value="ALT_FRAME"/>
    <property type="molecule type" value="mRNA"/>
</dbReference>
<dbReference type="EMBL" id="AK075871">
    <property type="protein sequence ID" value="BAC36018.1"/>
    <property type="molecule type" value="mRNA"/>
</dbReference>
<dbReference type="EMBL" id="AK170784">
    <property type="protein sequence ID" value="BAE42027.1"/>
    <property type="molecule type" value="mRNA"/>
</dbReference>
<dbReference type="EMBL" id="BC026877">
    <property type="protein sequence ID" value="AAH26877.1"/>
    <property type="status" value="ALT_FRAME"/>
    <property type="molecule type" value="mRNA"/>
</dbReference>
<dbReference type="EMBL" id="BC046558">
    <property type="protein sequence ID" value="AAH46558.1"/>
    <property type="molecule type" value="mRNA"/>
</dbReference>
<dbReference type="EMBL" id="BC069859">
    <property type="protein sequence ID" value="AAH69859.1"/>
    <property type="molecule type" value="mRNA"/>
</dbReference>
<dbReference type="EMBL" id="BC085258">
    <property type="protein sequence ID" value="AAH85258.1"/>
    <property type="molecule type" value="mRNA"/>
</dbReference>
<dbReference type="EMBL" id="BC089026">
    <property type="protein sequence ID" value="AAH89026.1"/>
    <property type="molecule type" value="mRNA"/>
</dbReference>
<dbReference type="CCDS" id="CCDS27980.1">
    <molecule id="Q8BGX7-1"/>
</dbReference>
<dbReference type="RefSeq" id="NP_666180.2">
    <molecule id="Q8BGX7-1"/>
    <property type="nucleotide sequence ID" value="NM_146068.4"/>
</dbReference>
<dbReference type="BioGRID" id="230222">
    <property type="interactions" value="1"/>
</dbReference>
<dbReference type="FunCoup" id="Q8BGX7">
    <property type="interactions" value="2537"/>
</dbReference>
<dbReference type="STRING" id="10090.ENSMUSP00000038820"/>
<dbReference type="iPTMnet" id="Q8BGX7"/>
<dbReference type="PhosphoSitePlus" id="Q8BGX7"/>
<dbReference type="PaxDb" id="10090-ENSMUSP00000038820"/>
<dbReference type="PeptideAtlas" id="Q8BGX7"/>
<dbReference type="ProteomicsDB" id="258588">
    <molecule id="Q8BGX7-1"/>
</dbReference>
<dbReference type="ProteomicsDB" id="258589">
    <molecule id="Q8BGX7-2"/>
</dbReference>
<dbReference type="ProteomicsDB" id="258590">
    <molecule id="Q8BGX7-3"/>
</dbReference>
<dbReference type="Pumba" id="Q8BGX7"/>
<dbReference type="Antibodypedia" id="24233">
    <property type="antibodies" value="26 antibodies from 8 providers"/>
</dbReference>
<dbReference type="DNASU" id="224008"/>
<dbReference type="Ensembl" id="ENSMUST00000040248.9">
    <molecule id="Q8BGX7-1"/>
    <property type="protein sequence ID" value="ENSMUSP00000038820.8"/>
    <property type="gene ID" value="ENSMUSG00000041974.11"/>
</dbReference>
<dbReference type="GeneID" id="224008"/>
<dbReference type="KEGG" id="mmu:224008"/>
<dbReference type="UCSC" id="uc007yhy.2">
    <molecule id="Q8BGX7-3"/>
    <property type="organism name" value="mouse"/>
</dbReference>
<dbReference type="UCSC" id="uc007yhz.2">
    <molecule id="Q8BGX7-1"/>
    <property type="organism name" value="mouse"/>
</dbReference>
<dbReference type="AGR" id="MGI:1924834"/>
<dbReference type="CTD" id="23514"/>
<dbReference type="MGI" id="MGI:1924834">
    <property type="gene designation" value="Spidr"/>
</dbReference>
<dbReference type="VEuPathDB" id="HostDB:ENSMUSG00000041974"/>
<dbReference type="eggNOG" id="ENOG502S0BG">
    <property type="taxonomic scope" value="Eukaryota"/>
</dbReference>
<dbReference type="GeneTree" id="ENSGT00390000014654"/>
<dbReference type="HOGENOM" id="CLU_013509_0_0_1"/>
<dbReference type="InParanoid" id="Q8BGX7"/>
<dbReference type="OMA" id="KTCRCTF"/>
<dbReference type="OrthoDB" id="1914453at2759"/>
<dbReference type="PhylomeDB" id="Q8BGX7"/>
<dbReference type="TreeFam" id="TF333292"/>
<dbReference type="Reactome" id="R-MMU-5693568">
    <property type="pathway name" value="Resolution of D-loop Structures through Holliday Junction Intermediates"/>
</dbReference>
<dbReference type="BioGRID-ORCS" id="224008">
    <property type="hits" value="5 hits in 112 CRISPR screens"/>
</dbReference>
<dbReference type="ChiTaRS" id="Spidr">
    <property type="organism name" value="mouse"/>
</dbReference>
<dbReference type="PRO" id="PR:Q8BGX7"/>
<dbReference type="Proteomes" id="UP000000589">
    <property type="component" value="Chromosome 16"/>
</dbReference>
<dbReference type="RNAct" id="Q8BGX7">
    <property type="molecule type" value="protein"/>
</dbReference>
<dbReference type="Bgee" id="ENSMUSG00000041974">
    <property type="expression patterns" value="Expressed in granulocyte and 178 other cell types or tissues"/>
</dbReference>
<dbReference type="GO" id="GO:0000228">
    <property type="term" value="C:nuclear chromosome"/>
    <property type="evidence" value="ECO:0000250"/>
    <property type="project" value="UniProtKB"/>
</dbReference>
<dbReference type="GO" id="GO:0005654">
    <property type="term" value="C:nucleoplasm"/>
    <property type="evidence" value="ECO:0007669"/>
    <property type="project" value="Ensembl"/>
</dbReference>
<dbReference type="GO" id="GO:0072757">
    <property type="term" value="P:cellular response to camptothecin"/>
    <property type="evidence" value="ECO:0000250"/>
    <property type="project" value="UniProtKB"/>
</dbReference>
<dbReference type="GO" id="GO:0072711">
    <property type="term" value="P:cellular response to hydroxyurea"/>
    <property type="evidence" value="ECO:0000250"/>
    <property type="project" value="UniProtKB"/>
</dbReference>
<dbReference type="GO" id="GO:0071479">
    <property type="term" value="P:cellular response to ionizing radiation"/>
    <property type="evidence" value="ECO:0000250"/>
    <property type="project" value="UniProtKB"/>
</dbReference>
<dbReference type="GO" id="GO:0006974">
    <property type="term" value="P:DNA damage response"/>
    <property type="evidence" value="ECO:0000250"/>
    <property type="project" value="UniProtKB"/>
</dbReference>
<dbReference type="GO" id="GO:0000724">
    <property type="term" value="P:double-strand break repair via homologous recombination"/>
    <property type="evidence" value="ECO:0000250"/>
    <property type="project" value="UniProtKB"/>
</dbReference>
<dbReference type="GO" id="GO:2000781">
    <property type="term" value="P:positive regulation of double-strand break repair"/>
    <property type="evidence" value="ECO:0000250"/>
    <property type="project" value="UniProtKB"/>
</dbReference>
<dbReference type="GO" id="GO:0031334">
    <property type="term" value="P:positive regulation of protein-containing complex assembly"/>
    <property type="evidence" value="ECO:0000250"/>
    <property type="project" value="UniProtKB"/>
</dbReference>
<dbReference type="GO" id="GO:0010569">
    <property type="term" value="P:regulation of double-strand break repair via homologous recombination"/>
    <property type="evidence" value="ECO:0000250"/>
    <property type="project" value="UniProtKB"/>
</dbReference>
<dbReference type="GO" id="GO:0070202">
    <property type="term" value="P:regulation of establishment of protein localization to chromosome"/>
    <property type="evidence" value="ECO:0000250"/>
    <property type="project" value="UniProtKB"/>
</dbReference>
<dbReference type="InterPro" id="IPR053054">
    <property type="entry name" value="DNA_repair-scaffolding"/>
</dbReference>
<dbReference type="InterPro" id="IPR028026">
    <property type="entry name" value="DUF4502"/>
</dbReference>
<dbReference type="InterPro" id="IPR028032">
    <property type="entry name" value="DUF4503"/>
</dbReference>
<dbReference type="PANTHER" id="PTHR34347:SF1">
    <property type="entry name" value="DNA REPAIR-SCAFFOLDING PROTEIN"/>
    <property type="match status" value="1"/>
</dbReference>
<dbReference type="PANTHER" id="PTHR34347">
    <property type="entry name" value="DNA REPAIR-SCAFFOLDING PROTEIN SPIDR"/>
    <property type="match status" value="1"/>
</dbReference>
<dbReference type="Pfam" id="PF14950">
    <property type="entry name" value="DUF4502"/>
    <property type="match status" value="1"/>
</dbReference>
<dbReference type="Pfam" id="PF14951">
    <property type="entry name" value="DUF4503"/>
    <property type="match status" value="1"/>
</dbReference>
<gene>
    <name type="primary">Spidr</name>
    <name type="synonym">Kiaa0146</name>
</gene>
<keyword id="KW-0025">Alternative splicing</keyword>
<keyword id="KW-0227">DNA damage</keyword>
<keyword id="KW-0233">DNA recombination</keyword>
<keyword id="KW-0234">DNA repair</keyword>
<keyword id="KW-0539">Nucleus</keyword>
<keyword id="KW-1185">Reference proteome</keyword>